<comment type="function">
    <text evidence="1">Bifunctional enzyme which can phosphorylate or dephosphorylate isocitrate dehydrogenase (IDH) on a specific serine residue. This is a regulatory mechanism which enables bacteria to bypass the Krebs cycle via the glyoxylate shunt in response to the source of carbon. When bacteria are grown on glucose, IDH is fully active and unphosphorylated, but when grown on acetate or ethanol, the activity of IDH declines drastically concomitant with its phosphorylation.</text>
</comment>
<comment type="catalytic activity">
    <reaction evidence="1">
        <text>L-seryl-[isocitrate dehydrogenase] + ATP = O-phospho-L-seryl-[isocitrate dehydrogenase] + ADP + H(+)</text>
        <dbReference type="Rhea" id="RHEA:43540"/>
        <dbReference type="Rhea" id="RHEA-COMP:10605"/>
        <dbReference type="Rhea" id="RHEA-COMP:10606"/>
        <dbReference type="ChEBI" id="CHEBI:15378"/>
        <dbReference type="ChEBI" id="CHEBI:29999"/>
        <dbReference type="ChEBI" id="CHEBI:30616"/>
        <dbReference type="ChEBI" id="CHEBI:83421"/>
        <dbReference type="ChEBI" id="CHEBI:456216"/>
        <dbReference type="EC" id="2.7.11.5"/>
    </reaction>
</comment>
<comment type="subcellular location">
    <subcellularLocation>
        <location evidence="1">Cytoplasm</location>
    </subcellularLocation>
</comment>
<comment type="similarity">
    <text evidence="1">Belongs to the AceK family.</text>
</comment>
<accession>Q8P4D0</accession>
<evidence type="ECO:0000255" key="1">
    <source>
        <dbReference type="HAMAP-Rule" id="MF_00747"/>
    </source>
</evidence>
<keyword id="KW-0067">ATP-binding</keyword>
<keyword id="KW-0963">Cytoplasm</keyword>
<keyword id="KW-0329">Glyoxylate bypass</keyword>
<keyword id="KW-0378">Hydrolase</keyword>
<keyword id="KW-0418">Kinase</keyword>
<keyword id="KW-0547">Nucleotide-binding</keyword>
<keyword id="KW-0904">Protein phosphatase</keyword>
<keyword id="KW-1185">Reference proteome</keyword>
<keyword id="KW-0723">Serine/threonine-protein kinase</keyword>
<keyword id="KW-0808">Transferase</keyword>
<keyword id="KW-0816">Tricarboxylic acid cycle</keyword>
<gene>
    <name evidence="1" type="primary">aceK</name>
    <name type="ordered locus">XCC3780</name>
</gene>
<proteinExistence type="inferred from homology"/>
<sequence length="579" mass="66976">MNQQPLPPQSERRALAIGRAVYEAFQDYHAQFSQITARARQRFETRDWSGAREDAVARIALYDHYISECMLRLRAVLLGQAHDRALWMRARTHYAELLTGLIDQELYKTFYNTLTRRYFRTQGVDAQIEFIALDIEPTDAITVPVARHTYAVSPGRLTEMLVRVLGDYPFEVPYAHRTRCAAAIAVRLLDDLAHWGEHPVRSVELLETVFYRERRAYLVGRLFGEHRFSPCVIALVNDDAGLRAEAVLTRRSDVAQLFSNSRSYFQADLTTVGDAVVFLRSLLTHKPIDELYTMLGRAKQGKTERYRTFFRHFQAHPAEQLVHADGTPGMVMVVFTLPSYPLVFKLIRDRFAYPKTMSRAQVEGKYELVFQLDRIGRLLDAQPYRFLRFPKARFSPALLQDLQSSCAMSLSEDGDDVLIALCYVQRRLRPLNLYLREQLPAAAHAAALDYGQAIKDMARNNIFPGDMLLKNFGITRHQRAVFYDYDELCLITECTFRDWPTPTSYEEQMAAEPWFHVGPRDVFPERFALFMGLPSSQLEAVKHMHPELFDPQWWRDLQARLREDDYPDTPPYADAQKLA</sequence>
<protein>
    <recommendedName>
        <fullName evidence="1">Isocitrate dehydrogenase kinase/phosphatase</fullName>
        <shortName evidence="1">IDH kinase/phosphatase</shortName>
        <shortName evidence="1">IDHK/P</shortName>
        <ecNumber evidence="1">2.7.11.5</ecNumber>
        <ecNumber evidence="1">3.1.3.-</ecNumber>
    </recommendedName>
</protein>
<feature type="chain" id="PRO_0000057911" description="Isocitrate dehydrogenase kinase/phosphatase">
    <location>
        <begin position="1"/>
        <end position="579"/>
    </location>
</feature>
<feature type="active site" evidence="1">
    <location>
        <position position="380"/>
    </location>
</feature>
<feature type="binding site" evidence="1">
    <location>
        <begin position="324"/>
        <end position="330"/>
    </location>
    <ligand>
        <name>ATP</name>
        <dbReference type="ChEBI" id="CHEBI:30616"/>
    </ligand>
</feature>
<feature type="binding site" evidence="1">
    <location>
        <position position="345"/>
    </location>
    <ligand>
        <name>ATP</name>
        <dbReference type="ChEBI" id="CHEBI:30616"/>
    </ligand>
</feature>
<reference key="1">
    <citation type="journal article" date="2002" name="Nature">
        <title>Comparison of the genomes of two Xanthomonas pathogens with differing host specificities.</title>
        <authorList>
            <person name="da Silva A.C.R."/>
            <person name="Ferro J.A."/>
            <person name="Reinach F.C."/>
            <person name="Farah C.S."/>
            <person name="Furlan L.R."/>
            <person name="Quaggio R.B."/>
            <person name="Monteiro-Vitorello C.B."/>
            <person name="Van Sluys M.A."/>
            <person name="Almeida N.F. Jr."/>
            <person name="Alves L.M.C."/>
            <person name="do Amaral A.M."/>
            <person name="Bertolini M.C."/>
            <person name="Camargo L.E.A."/>
            <person name="Camarotte G."/>
            <person name="Cannavan F."/>
            <person name="Cardozo J."/>
            <person name="Chambergo F."/>
            <person name="Ciapina L.P."/>
            <person name="Cicarelli R.M.B."/>
            <person name="Coutinho L.L."/>
            <person name="Cursino-Santos J.R."/>
            <person name="El-Dorry H."/>
            <person name="Faria J.B."/>
            <person name="Ferreira A.J.S."/>
            <person name="Ferreira R.C.C."/>
            <person name="Ferro M.I.T."/>
            <person name="Formighieri E.F."/>
            <person name="Franco M.C."/>
            <person name="Greggio C.C."/>
            <person name="Gruber A."/>
            <person name="Katsuyama A.M."/>
            <person name="Kishi L.T."/>
            <person name="Leite R.P."/>
            <person name="Lemos E.G.M."/>
            <person name="Lemos M.V.F."/>
            <person name="Locali E.C."/>
            <person name="Machado M.A."/>
            <person name="Madeira A.M.B.N."/>
            <person name="Martinez-Rossi N.M."/>
            <person name="Martins E.C."/>
            <person name="Meidanis J."/>
            <person name="Menck C.F.M."/>
            <person name="Miyaki C.Y."/>
            <person name="Moon D.H."/>
            <person name="Moreira L.M."/>
            <person name="Novo M.T.M."/>
            <person name="Okura V.K."/>
            <person name="Oliveira M.C."/>
            <person name="Oliveira V.R."/>
            <person name="Pereira H.A."/>
            <person name="Rossi A."/>
            <person name="Sena J.A.D."/>
            <person name="Silva C."/>
            <person name="de Souza R.F."/>
            <person name="Spinola L.A.F."/>
            <person name="Takita M.A."/>
            <person name="Tamura R.E."/>
            <person name="Teixeira E.C."/>
            <person name="Tezza R.I.D."/>
            <person name="Trindade dos Santos M."/>
            <person name="Truffi D."/>
            <person name="Tsai S.M."/>
            <person name="White F.F."/>
            <person name="Setubal J.C."/>
            <person name="Kitajima J.P."/>
        </authorList>
    </citation>
    <scope>NUCLEOTIDE SEQUENCE [LARGE SCALE GENOMIC DNA]</scope>
    <source>
        <strain>ATCC 33913 / DSM 3586 / NCPPB 528 / LMG 568 / P 25</strain>
    </source>
</reference>
<name>ACEK_XANCP</name>
<organism>
    <name type="scientific">Xanthomonas campestris pv. campestris (strain ATCC 33913 / DSM 3586 / NCPPB 528 / LMG 568 / P 25)</name>
    <dbReference type="NCBI Taxonomy" id="190485"/>
    <lineage>
        <taxon>Bacteria</taxon>
        <taxon>Pseudomonadati</taxon>
        <taxon>Pseudomonadota</taxon>
        <taxon>Gammaproteobacteria</taxon>
        <taxon>Lysobacterales</taxon>
        <taxon>Lysobacteraceae</taxon>
        <taxon>Xanthomonas</taxon>
    </lineage>
</organism>
<dbReference type="EC" id="2.7.11.5" evidence="1"/>
<dbReference type="EC" id="3.1.3.-" evidence="1"/>
<dbReference type="EMBL" id="AE008922">
    <property type="protein sequence ID" value="AAM43480.1"/>
    <property type="molecule type" value="Genomic_DNA"/>
</dbReference>
<dbReference type="RefSeq" id="NP_639125.1">
    <property type="nucleotide sequence ID" value="NC_003902.1"/>
</dbReference>
<dbReference type="RefSeq" id="WP_011038861.1">
    <property type="nucleotide sequence ID" value="NC_003902.1"/>
</dbReference>
<dbReference type="SMR" id="Q8P4D0"/>
<dbReference type="STRING" id="190485.XCC3780"/>
<dbReference type="EnsemblBacteria" id="AAM43480">
    <property type="protein sequence ID" value="AAM43480"/>
    <property type="gene ID" value="XCC3780"/>
</dbReference>
<dbReference type="KEGG" id="xcc:XCC3780"/>
<dbReference type="PATRIC" id="fig|190485.4.peg.4046"/>
<dbReference type="eggNOG" id="COG4579">
    <property type="taxonomic scope" value="Bacteria"/>
</dbReference>
<dbReference type="HOGENOM" id="CLU_033804_1_1_6"/>
<dbReference type="OrthoDB" id="5287793at2"/>
<dbReference type="Proteomes" id="UP000001010">
    <property type="component" value="Chromosome"/>
</dbReference>
<dbReference type="GO" id="GO:0005737">
    <property type="term" value="C:cytoplasm"/>
    <property type="evidence" value="ECO:0007669"/>
    <property type="project" value="UniProtKB-SubCell"/>
</dbReference>
<dbReference type="GO" id="GO:0008772">
    <property type="term" value="F:[isocitrate dehydrogenase (NADP+)] kinase activity"/>
    <property type="evidence" value="ECO:0000318"/>
    <property type="project" value="GO_Central"/>
</dbReference>
<dbReference type="GO" id="GO:0016208">
    <property type="term" value="F:AMP binding"/>
    <property type="evidence" value="ECO:0000318"/>
    <property type="project" value="GO_Central"/>
</dbReference>
<dbReference type="GO" id="GO:0005524">
    <property type="term" value="F:ATP binding"/>
    <property type="evidence" value="ECO:0000318"/>
    <property type="project" value="GO_Central"/>
</dbReference>
<dbReference type="GO" id="GO:0004721">
    <property type="term" value="F:phosphoprotein phosphatase activity"/>
    <property type="evidence" value="ECO:0000318"/>
    <property type="project" value="GO_Central"/>
</dbReference>
<dbReference type="GO" id="GO:0004674">
    <property type="term" value="F:protein serine/threonine kinase activity"/>
    <property type="evidence" value="ECO:0007669"/>
    <property type="project" value="UniProtKB-KW"/>
</dbReference>
<dbReference type="GO" id="GO:0006006">
    <property type="term" value="P:glucose metabolic process"/>
    <property type="evidence" value="ECO:0007669"/>
    <property type="project" value="InterPro"/>
</dbReference>
<dbReference type="GO" id="GO:0006097">
    <property type="term" value="P:glyoxylate cycle"/>
    <property type="evidence" value="ECO:0007669"/>
    <property type="project" value="UniProtKB-UniRule"/>
</dbReference>
<dbReference type="GO" id="GO:0006099">
    <property type="term" value="P:tricarboxylic acid cycle"/>
    <property type="evidence" value="ECO:0007669"/>
    <property type="project" value="UniProtKB-UniRule"/>
</dbReference>
<dbReference type="HAMAP" id="MF_00747">
    <property type="entry name" value="AceK"/>
    <property type="match status" value="1"/>
</dbReference>
<dbReference type="InterPro" id="IPR046855">
    <property type="entry name" value="AceK_kinase"/>
</dbReference>
<dbReference type="InterPro" id="IPR046854">
    <property type="entry name" value="AceK_regulatory"/>
</dbReference>
<dbReference type="InterPro" id="IPR010452">
    <property type="entry name" value="Isocitrate_DH_AceK"/>
</dbReference>
<dbReference type="NCBIfam" id="NF002804">
    <property type="entry name" value="PRK02946.1"/>
    <property type="match status" value="1"/>
</dbReference>
<dbReference type="PANTHER" id="PTHR39559">
    <property type="match status" value="1"/>
</dbReference>
<dbReference type="PANTHER" id="PTHR39559:SF1">
    <property type="entry name" value="ISOCITRATE DEHYDROGENASE KINASE_PHOSPHATASE"/>
    <property type="match status" value="1"/>
</dbReference>
<dbReference type="Pfam" id="PF06315">
    <property type="entry name" value="AceK_kinase"/>
    <property type="match status" value="1"/>
</dbReference>
<dbReference type="Pfam" id="PF20423">
    <property type="entry name" value="AceK_regulatory"/>
    <property type="match status" value="1"/>
</dbReference>
<dbReference type="PIRSF" id="PIRSF000719">
    <property type="entry name" value="AceK"/>
    <property type="match status" value="1"/>
</dbReference>